<proteinExistence type="inferred from homology"/>
<comment type="function">
    <text evidence="1">Modulates the synthesis of GlmS, by affecting the processing and stability of the regulatory small RNA GlmZ. When glucosamine-6-phosphate (GlcN6P) concentrations are high in the cell, RapZ binds GlmZ and targets it to cleavage by RNase E. Consequently, GlmZ is inactivated and unable to activate GlmS synthesis. Under low GlcN6P concentrations, RapZ is sequestered and inactivated by an other regulatory small RNA, GlmY, preventing GlmZ degradation and leading to synthesis of GlmS.</text>
</comment>
<comment type="subunit">
    <text evidence="1">Homotrimer.</text>
</comment>
<comment type="similarity">
    <text evidence="1">Belongs to the RapZ-like family. RapZ subfamily.</text>
</comment>
<keyword id="KW-0067">ATP-binding</keyword>
<keyword id="KW-0342">GTP-binding</keyword>
<keyword id="KW-0547">Nucleotide-binding</keyword>
<keyword id="KW-0694">RNA-binding</keyword>
<reference key="1">
    <citation type="journal article" date="2006" name="PLoS Genet.">
        <title>The complete genome sequence and comparative genome analysis of the high pathogenicity Yersinia enterocolitica strain 8081.</title>
        <authorList>
            <person name="Thomson N.R."/>
            <person name="Howard S."/>
            <person name="Wren B.W."/>
            <person name="Holden M.T.G."/>
            <person name="Crossman L."/>
            <person name="Challis G.L."/>
            <person name="Churcher C."/>
            <person name="Mungall K."/>
            <person name="Brooks K."/>
            <person name="Chillingworth T."/>
            <person name="Feltwell T."/>
            <person name="Abdellah Z."/>
            <person name="Hauser H."/>
            <person name="Jagels K."/>
            <person name="Maddison M."/>
            <person name="Moule S."/>
            <person name="Sanders M."/>
            <person name="Whitehead S."/>
            <person name="Quail M.A."/>
            <person name="Dougan G."/>
            <person name="Parkhill J."/>
            <person name="Prentice M.B."/>
        </authorList>
    </citation>
    <scope>NUCLEOTIDE SEQUENCE [LARGE SCALE GENOMIC DNA]</scope>
    <source>
        <strain>NCTC 13174 / 8081</strain>
    </source>
</reference>
<organism>
    <name type="scientific">Yersinia enterocolitica serotype O:8 / biotype 1B (strain NCTC 13174 / 8081)</name>
    <dbReference type="NCBI Taxonomy" id="393305"/>
    <lineage>
        <taxon>Bacteria</taxon>
        <taxon>Pseudomonadati</taxon>
        <taxon>Pseudomonadota</taxon>
        <taxon>Gammaproteobacteria</taxon>
        <taxon>Enterobacterales</taxon>
        <taxon>Yersiniaceae</taxon>
        <taxon>Yersinia</taxon>
    </lineage>
</organism>
<name>RAPZ_YERE8</name>
<dbReference type="EMBL" id="AM286415">
    <property type="protein sequence ID" value="CAL13788.1"/>
    <property type="molecule type" value="Genomic_DNA"/>
</dbReference>
<dbReference type="RefSeq" id="WP_005162486.1">
    <property type="nucleotide sequence ID" value="NC_008800.1"/>
</dbReference>
<dbReference type="RefSeq" id="YP_001007916.1">
    <property type="nucleotide sequence ID" value="NC_008800.1"/>
</dbReference>
<dbReference type="SMR" id="A1JRD2"/>
<dbReference type="GeneID" id="93970671"/>
<dbReference type="KEGG" id="yen:YE3762"/>
<dbReference type="PATRIC" id="fig|393305.7.peg.4005"/>
<dbReference type="eggNOG" id="COG1660">
    <property type="taxonomic scope" value="Bacteria"/>
</dbReference>
<dbReference type="HOGENOM" id="CLU_059558_1_1_6"/>
<dbReference type="OrthoDB" id="9784461at2"/>
<dbReference type="Proteomes" id="UP000000642">
    <property type="component" value="Chromosome"/>
</dbReference>
<dbReference type="GO" id="GO:0005524">
    <property type="term" value="F:ATP binding"/>
    <property type="evidence" value="ECO:0007669"/>
    <property type="project" value="UniProtKB-UniRule"/>
</dbReference>
<dbReference type="GO" id="GO:0005525">
    <property type="term" value="F:GTP binding"/>
    <property type="evidence" value="ECO:0007669"/>
    <property type="project" value="UniProtKB-UniRule"/>
</dbReference>
<dbReference type="GO" id="GO:0003723">
    <property type="term" value="F:RNA binding"/>
    <property type="evidence" value="ECO:0007669"/>
    <property type="project" value="UniProtKB-KW"/>
</dbReference>
<dbReference type="HAMAP" id="MF_00636">
    <property type="entry name" value="RapZ_like"/>
    <property type="match status" value="1"/>
</dbReference>
<dbReference type="InterPro" id="IPR027417">
    <property type="entry name" value="P-loop_NTPase"/>
</dbReference>
<dbReference type="InterPro" id="IPR005337">
    <property type="entry name" value="RapZ-like"/>
</dbReference>
<dbReference type="InterPro" id="IPR053930">
    <property type="entry name" value="RapZ-like_N"/>
</dbReference>
<dbReference type="InterPro" id="IPR053931">
    <property type="entry name" value="RapZ_C"/>
</dbReference>
<dbReference type="NCBIfam" id="NF003828">
    <property type="entry name" value="PRK05416.1"/>
    <property type="match status" value="1"/>
</dbReference>
<dbReference type="PANTHER" id="PTHR30448">
    <property type="entry name" value="RNASE ADAPTER PROTEIN RAPZ"/>
    <property type="match status" value="1"/>
</dbReference>
<dbReference type="PANTHER" id="PTHR30448:SF0">
    <property type="entry name" value="RNASE ADAPTER PROTEIN RAPZ"/>
    <property type="match status" value="1"/>
</dbReference>
<dbReference type="Pfam" id="PF22740">
    <property type="entry name" value="PapZ_C"/>
    <property type="match status" value="1"/>
</dbReference>
<dbReference type="Pfam" id="PF03668">
    <property type="entry name" value="RapZ-like_N"/>
    <property type="match status" value="1"/>
</dbReference>
<dbReference type="PIRSF" id="PIRSF005052">
    <property type="entry name" value="P-loopkin"/>
    <property type="match status" value="1"/>
</dbReference>
<dbReference type="SUPFAM" id="SSF52540">
    <property type="entry name" value="P-loop containing nucleoside triphosphate hydrolases"/>
    <property type="match status" value="1"/>
</dbReference>
<gene>
    <name evidence="1" type="primary">rapZ</name>
    <name type="ordered locus">YE3762</name>
</gene>
<protein>
    <recommendedName>
        <fullName evidence="1">RNase adapter protein RapZ</fullName>
    </recommendedName>
</protein>
<accession>A1JRD2</accession>
<evidence type="ECO:0000255" key="1">
    <source>
        <dbReference type="HAMAP-Rule" id="MF_00636"/>
    </source>
</evidence>
<feature type="chain" id="PRO_1000056871" description="RNase adapter protein RapZ">
    <location>
        <begin position="1"/>
        <end position="283"/>
    </location>
</feature>
<feature type="region of interest" description="RNA-binding" evidence="1">
    <location>
        <begin position="266"/>
        <end position="283"/>
    </location>
</feature>
<feature type="binding site" evidence="1">
    <location>
        <begin position="8"/>
        <end position="15"/>
    </location>
    <ligand>
        <name>ATP</name>
        <dbReference type="ChEBI" id="CHEBI:30616"/>
    </ligand>
</feature>
<feature type="binding site" evidence="1">
    <location>
        <begin position="56"/>
        <end position="59"/>
    </location>
    <ligand>
        <name>GTP</name>
        <dbReference type="ChEBI" id="CHEBI:37565"/>
    </ligand>
</feature>
<sequence length="283" mass="32420">MVLMIVSGRSGSGKSVALRALEDMGFYCVDNLPVVLLPQLASTLADRNISAAVSIDVRNMPESPEVFEHAMTQLPDSFSPQLLFLDADRNTLIRRYSDTRRLHPLSTKNLSLESAIDEESDLLEPLRSRADLIIDTSEMSVHELAEMLRTRLLGKRERELTMVFESFGFKHGIPIDADYVFDVRFLPNPHWDPKLRPMTGLDKPVISFLDRHTEVHNFIYQTRSYLELWLPMLETNNRSYLTVAIGCTGGKHRSVYVAEQLADYFRARGKNVQSRHRTLEKRK</sequence>